<sequence>MVQVNENYLKLKAGYLFPEIAKRVKIYSQSNKSAEIIKLGIGDVTEPLPRACIDAMSKALDDMGTAEGFRGYGPEQGYSWLREKISEHDFISRGCQILPEEIFVSDGSKCDSSNILDILGKDNSIAVTDPVYPVYVDSNVMTGRTGDALENGTYQGLTYLAINEGNNFLPELPQKKVDILYLCFPNNPTGATITKEELKKWVDYALQNKSLILFDAAYEAFIQDNDIPHSIYEIEGAKDCAIEFRSFSKNAGFTGVRCAFTVIPKNLKGLSSTNEEIDLWPLWNRRQSTKFNGVSYVVQRGAEAVYSLEGKKEVRGLIDFYMENAKIMKNKLQTAGYKVYGGDNAPYIWIKVPDQMTSWNFFDFLLQNVSVVGTPGSGFGLSGEGYFRLSAFNSRSNVLDAMERIINI</sequence>
<organism>
    <name type="scientific">Prochlorococcus marinus (strain MIT 9312)</name>
    <dbReference type="NCBI Taxonomy" id="74546"/>
    <lineage>
        <taxon>Bacteria</taxon>
        <taxon>Bacillati</taxon>
        <taxon>Cyanobacteriota</taxon>
        <taxon>Cyanophyceae</taxon>
        <taxon>Synechococcales</taxon>
        <taxon>Prochlorococcaceae</taxon>
        <taxon>Prochlorococcus</taxon>
    </lineage>
</organism>
<keyword id="KW-0032">Aminotransferase</keyword>
<keyword id="KW-0663">Pyridoxal phosphate</keyword>
<keyword id="KW-0808">Transferase</keyword>
<accession>Q318P3</accession>
<feature type="chain" id="PRO_0000312537" description="LL-diaminopimelate aminotransferase">
    <location>
        <begin position="1"/>
        <end position="408"/>
    </location>
</feature>
<feature type="binding site" evidence="1">
    <location>
        <position position="15"/>
    </location>
    <ligand>
        <name>substrate</name>
    </ligand>
</feature>
<feature type="binding site" evidence="1">
    <location>
        <position position="42"/>
    </location>
    <ligand>
        <name>substrate</name>
    </ligand>
</feature>
<feature type="binding site" evidence="1">
    <location>
        <position position="72"/>
    </location>
    <ligand>
        <name>pyridoxal 5'-phosphate</name>
        <dbReference type="ChEBI" id="CHEBI:597326"/>
    </ligand>
</feature>
<feature type="binding site" evidence="1">
    <location>
        <begin position="108"/>
        <end position="109"/>
    </location>
    <ligand>
        <name>pyridoxal 5'-phosphate</name>
        <dbReference type="ChEBI" id="CHEBI:597326"/>
    </ligand>
</feature>
<feature type="binding site" evidence="1">
    <location>
        <position position="109"/>
    </location>
    <ligand>
        <name>substrate</name>
    </ligand>
</feature>
<feature type="binding site" evidence="1">
    <location>
        <position position="132"/>
    </location>
    <ligand>
        <name>pyridoxal 5'-phosphate</name>
        <dbReference type="ChEBI" id="CHEBI:597326"/>
    </ligand>
</feature>
<feature type="binding site" evidence="1">
    <location>
        <position position="132"/>
    </location>
    <ligand>
        <name>substrate</name>
    </ligand>
</feature>
<feature type="binding site" evidence="1">
    <location>
        <position position="187"/>
    </location>
    <ligand>
        <name>pyridoxal 5'-phosphate</name>
        <dbReference type="ChEBI" id="CHEBI:597326"/>
    </ligand>
</feature>
<feature type="binding site" evidence="1">
    <location>
        <position position="187"/>
    </location>
    <ligand>
        <name>substrate</name>
    </ligand>
</feature>
<feature type="binding site" evidence="1">
    <location>
        <position position="218"/>
    </location>
    <ligand>
        <name>pyridoxal 5'-phosphate</name>
        <dbReference type="ChEBI" id="CHEBI:597326"/>
    </ligand>
</feature>
<feature type="binding site" evidence="1">
    <location>
        <begin position="246"/>
        <end position="248"/>
    </location>
    <ligand>
        <name>pyridoxal 5'-phosphate</name>
        <dbReference type="ChEBI" id="CHEBI:597326"/>
    </ligand>
</feature>
<feature type="binding site" evidence="1">
    <location>
        <position position="257"/>
    </location>
    <ligand>
        <name>pyridoxal 5'-phosphate</name>
        <dbReference type="ChEBI" id="CHEBI:597326"/>
    </ligand>
</feature>
<feature type="binding site" evidence="1">
    <location>
        <position position="292"/>
    </location>
    <ligand>
        <name>pyridoxal 5'-phosphate</name>
        <dbReference type="ChEBI" id="CHEBI:597326"/>
    </ligand>
</feature>
<feature type="binding site" evidence="1">
    <location>
        <position position="292"/>
    </location>
    <ligand>
        <name>substrate</name>
    </ligand>
</feature>
<feature type="binding site" evidence="1">
    <location>
        <position position="388"/>
    </location>
    <ligand>
        <name>substrate</name>
    </ligand>
</feature>
<feature type="modified residue" description="N6-(pyridoxal phosphate)lysine" evidence="1">
    <location>
        <position position="249"/>
    </location>
</feature>
<dbReference type="EC" id="2.6.1.83" evidence="1"/>
<dbReference type="EMBL" id="CP000111">
    <property type="protein sequence ID" value="ABB50652.1"/>
    <property type="molecule type" value="Genomic_DNA"/>
</dbReference>
<dbReference type="RefSeq" id="WP_011377134.1">
    <property type="nucleotide sequence ID" value="NC_007577.1"/>
</dbReference>
<dbReference type="SMR" id="Q318P3"/>
<dbReference type="STRING" id="74546.PMT9312_1592"/>
<dbReference type="KEGG" id="pmi:PMT9312_1592"/>
<dbReference type="eggNOG" id="COG0436">
    <property type="taxonomic scope" value="Bacteria"/>
</dbReference>
<dbReference type="HOGENOM" id="CLU_051433_0_0_3"/>
<dbReference type="OrthoDB" id="9802328at2"/>
<dbReference type="UniPathway" id="UPA00034">
    <property type="reaction ID" value="UER00466"/>
</dbReference>
<dbReference type="Proteomes" id="UP000002715">
    <property type="component" value="Chromosome"/>
</dbReference>
<dbReference type="GO" id="GO:0010285">
    <property type="term" value="F:L,L-diaminopimelate aminotransferase activity"/>
    <property type="evidence" value="ECO:0007669"/>
    <property type="project" value="UniProtKB-UniRule"/>
</dbReference>
<dbReference type="GO" id="GO:0030170">
    <property type="term" value="F:pyridoxal phosphate binding"/>
    <property type="evidence" value="ECO:0007669"/>
    <property type="project" value="UniProtKB-UniRule"/>
</dbReference>
<dbReference type="GO" id="GO:0033362">
    <property type="term" value="P:lysine biosynthetic process via diaminopimelate, diaminopimelate-aminotransferase pathway"/>
    <property type="evidence" value="ECO:0007669"/>
    <property type="project" value="UniProtKB-UniRule"/>
</dbReference>
<dbReference type="CDD" id="cd00609">
    <property type="entry name" value="AAT_like"/>
    <property type="match status" value="1"/>
</dbReference>
<dbReference type="FunFam" id="3.40.640.10:FF:000099">
    <property type="entry name" value="LL-diaminopimelate aminotransferase, chloroplastic"/>
    <property type="match status" value="1"/>
</dbReference>
<dbReference type="Gene3D" id="3.90.1150.10">
    <property type="entry name" value="Aspartate Aminotransferase, domain 1"/>
    <property type="match status" value="1"/>
</dbReference>
<dbReference type="Gene3D" id="3.40.640.10">
    <property type="entry name" value="Type I PLP-dependent aspartate aminotransferase-like (Major domain)"/>
    <property type="match status" value="1"/>
</dbReference>
<dbReference type="HAMAP" id="MF_01642">
    <property type="entry name" value="DapL_aminotrans_1"/>
    <property type="match status" value="1"/>
</dbReference>
<dbReference type="InterPro" id="IPR004839">
    <property type="entry name" value="Aminotransferase_I/II_large"/>
</dbReference>
<dbReference type="InterPro" id="IPR019942">
    <property type="entry name" value="DapL/ALD1"/>
</dbReference>
<dbReference type="InterPro" id="IPR015424">
    <property type="entry name" value="PyrdxlP-dep_Trfase"/>
</dbReference>
<dbReference type="InterPro" id="IPR015421">
    <property type="entry name" value="PyrdxlP-dep_Trfase_major"/>
</dbReference>
<dbReference type="InterPro" id="IPR015422">
    <property type="entry name" value="PyrdxlP-dep_Trfase_small"/>
</dbReference>
<dbReference type="NCBIfam" id="TIGR03542">
    <property type="entry name" value="DAPAT_plant"/>
    <property type="match status" value="1"/>
</dbReference>
<dbReference type="PANTHER" id="PTHR43144">
    <property type="entry name" value="AMINOTRANSFERASE"/>
    <property type="match status" value="1"/>
</dbReference>
<dbReference type="Pfam" id="PF00155">
    <property type="entry name" value="Aminotran_1_2"/>
    <property type="match status" value="1"/>
</dbReference>
<dbReference type="SUPFAM" id="SSF53383">
    <property type="entry name" value="PLP-dependent transferases"/>
    <property type="match status" value="1"/>
</dbReference>
<gene>
    <name evidence="1" type="primary">dapL</name>
    <name type="ordered locus">PMT9312_1592</name>
</gene>
<proteinExistence type="inferred from homology"/>
<evidence type="ECO:0000255" key="1">
    <source>
        <dbReference type="HAMAP-Rule" id="MF_01642"/>
    </source>
</evidence>
<reference key="1">
    <citation type="journal article" date="2006" name="Science">
        <title>Genomic islands and the ecology and evolution of Prochlorococcus.</title>
        <authorList>
            <person name="Coleman M.L."/>
            <person name="Sullivan M.B."/>
            <person name="Martiny A.C."/>
            <person name="Steglich C."/>
            <person name="Barry K."/>
            <person name="Delong E.F."/>
            <person name="Chisholm S.W."/>
        </authorList>
    </citation>
    <scope>NUCLEOTIDE SEQUENCE [LARGE SCALE GENOMIC DNA]</scope>
    <source>
        <strain>MIT 9312</strain>
    </source>
</reference>
<comment type="function">
    <text evidence="1">Involved in the synthesis of meso-diaminopimelate (m-DAP or DL-DAP), required for both lysine and peptidoglycan biosynthesis. Catalyzes the direct conversion of tetrahydrodipicolinate to LL-diaminopimelate.</text>
</comment>
<comment type="catalytic activity">
    <reaction evidence="1">
        <text>(2S,6S)-2,6-diaminopimelate + 2-oxoglutarate = (S)-2,3,4,5-tetrahydrodipicolinate + L-glutamate + H2O + H(+)</text>
        <dbReference type="Rhea" id="RHEA:23988"/>
        <dbReference type="ChEBI" id="CHEBI:15377"/>
        <dbReference type="ChEBI" id="CHEBI:15378"/>
        <dbReference type="ChEBI" id="CHEBI:16810"/>
        <dbReference type="ChEBI" id="CHEBI:16845"/>
        <dbReference type="ChEBI" id="CHEBI:29985"/>
        <dbReference type="ChEBI" id="CHEBI:57609"/>
        <dbReference type="EC" id="2.6.1.83"/>
    </reaction>
</comment>
<comment type="cofactor">
    <cofactor evidence="1">
        <name>pyridoxal 5'-phosphate</name>
        <dbReference type="ChEBI" id="CHEBI:597326"/>
    </cofactor>
</comment>
<comment type="pathway">
    <text evidence="1">Amino-acid biosynthesis; L-lysine biosynthesis via DAP pathway; LL-2,6-diaminopimelate from (S)-tetrahydrodipicolinate (aminotransferase route): step 1/1.</text>
</comment>
<comment type="subunit">
    <text evidence="1">Homodimer.</text>
</comment>
<comment type="similarity">
    <text evidence="1">Belongs to the class-I pyridoxal-phosphate-dependent aminotransferase family. LL-diaminopimelate aminotransferase subfamily.</text>
</comment>
<name>DAPAT_PROM9</name>
<protein>
    <recommendedName>
        <fullName evidence="1">LL-diaminopimelate aminotransferase</fullName>
        <shortName evidence="1">DAP-AT</shortName>
        <shortName evidence="1">DAP-aminotransferase</shortName>
        <shortName evidence="1">LL-DAP-aminotransferase</shortName>
        <ecNumber evidence="1">2.6.1.83</ecNumber>
    </recommendedName>
</protein>